<sequence length="252" mass="28044">MPTTERVAKVVLVDIEGTTTSISFVHDVLFPYAKNNVKKFLEESWESSSEVKQIVRELQQVPQYAEYTATLRVPPKEVDVQVITGFVRYLIDKDLKVTPLKTLQGLIWQQGYETGELMGHVFNDVPGAFEAWREAGLRIAVYSSGSVAAQKLIFKYSIVGDLLTHLSTHFDTHVGHKQESQSYANIAQSLGEDPSHILFLTDIPGEAAAARSAGLQTIILQRPGNTPLTDDQKYSNELIADFSSLHTLQLPE</sequence>
<comment type="function">
    <text evidence="1">Bifunctional enzyme that catalyzes the enolization of 2,3-diketo-5-methylthiopentyl-1-phosphate (DK-MTP-1-P) into the intermediate 2-hydroxy-3-keto-5-methylthiopentenyl-1-phosphate (HK-MTPenyl-1-P), which is then dephosphorylated to form the acireductone 1,2-dihydroxy-3-keto-5-methylthiopentene (DHK-MTPene).</text>
</comment>
<comment type="catalytic activity">
    <reaction evidence="1">
        <text>5-methylsulfanyl-2,3-dioxopentyl phosphate + H2O = 1,2-dihydroxy-5-(methylsulfanyl)pent-1-en-3-one + phosphate</text>
        <dbReference type="Rhea" id="RHEA:21700"/>
        <dbReference type="ChEBI" id="CHEBI:15377"/>
        <dbReference type="ChEBI" id="CHEBI:43474"/>
        <dbReference type="ChEBI" id="CHEBI:49252"/>
        <dbReference type="ChEBI" id="CHEBI:58828"/>
        <dbReference type="EC" id="3.1.3.77"/>
    </reaction>
</comment>
<comment type="cofactor">
    <cofactor evidence="1">
        <name>Mg(2+)</name>
        <dbReference type="ChEBI" id="CHEBI:18420"/>
    </cofactor>
    <text evidence="1">Binds 1 Mg(2+) ion per subunit.</text>
</comment>
<comment type="pathway">
    <text evidence="1">Amino-acid biosynthesis; L-methionine biosynthesis via salvage pathway; L-methionine from S-methyl-5-thio-alpha-D-ribose 1-phosphate: step 3/6.</text>
</comment>
<comment type="pathway">
    <text evidence="1">Amino-acid biosynthesis; L-methionine biosynthesis via salvage pathway; L-methionine from S-methyl-5-thio-alpha-D-ribose 1-phosphate: step 4/6.</text>
</comment>
<comment type="subunit">
    <text evidence="1">Monomer.</text>
</comment>
<comment type="subcellular location">
    <subcellularLocation>
        <location evidence="1">Cytoplasm</location>
    </subcellularLocation>
    <subcellularLocation>
        <location evidence="1">Nucleus</location>
    </subcellularLocation>
</comment>
<comment type="similarity">
    <text evidence="1">Belongs to the HAD-like hydrolase superfamily. MasA/MtnC family.</text>
</comment>
<accession>Q296B0</accession>
<feature type="chain" id="PRO_0000393982" description="Enolase-phosphatase E1">
    <location>
        <begin position="1"/>
        <end position="252"/>
    </location>
</feature>
<feature type="binding site" evidence="1">
    <location>
        <position position="14"/>
    </location>
    <ligand>
        <name>Mg(2+)</name>
        <dbReference type="ChEBI" id="CHEBI:18420"/>
    </ligand>
</feature>
<feature type="binding site" evidence="1">
    <location>
        <position position="16"/>
    </location>
    <ligand>
        <name>Mg(2+)</name>
        <dbReference type="ChEBI" id="CHEBI:18420"/>
    </ligand>
</feature>
<feature type="binding site" evidence="1">
    <location>
        <begin position="143"/>
        <end position="144"/>
    </location>
    <ligand>
        <name>substrate</name>
    </ligand>
</feature>
<feature type="binding site" evidence="1">
    <location>
        <position position="177"/>
    </location>
    <ligand>
        <name>substrate</name>
    </ligand>
</feature>
<feature type="binding site" evidence="1">
    <location>
        <position position="202"/>
    </location>
    <ligand>
        <name>Mg(2+)</name>
        <dbReference type="ChEBI" id="CHEBI:18420"/>
    </ligand>
</feature>
<keyword id="KW-0028">Amino-acid biosynthesis</keyword>
<keyword id="KW-0963">Cytoplasm</keyword>
<keyword id="KW-0378">Hydrolase</keyword>
<keyword id="KW-0460">Magnesium</keyword>
<keyword id="KW-0479">Metal-binding</keyword>
<keyword id="KW-0486">Methionine biosynthesis</keyword>
<keyword id="KW-0539">Nucleus</keyword>
<keyword id="KW-1185">Reference proteome</keyword>
<dbReference type="EC" id="3.1.3.77" evidence="1"/>
<dbReference type="EMBL" id="CM000070">
    <property type="protein sequence ID" value="EAL28548.2"/>
    <property type="molecule type" value="Genomic_DNA"/>
</dbReference>
<dbReference type="RefSeq" id="XP_001359402.2">
    <property type="nucleotide sequence ID" value="XM_001359365.3"/>
</dbReference>
<dbReference type="SMR" id="Q296B0"/>
<dbReference type="FunCoup" id="Q296B0">
    <property type="interactions" value="2161"/>
</dbReference>
<dbReference type="STRING" id="46245.Q296B0"/>
<dbReference type="EnsemblMetazoa" id="FBtr0286016">
    <property type="protein sequence ID" value="FBpp0284454"/>
    <property type="gene ID" value="FBgn0071504"/>
</dbReference>
<dbReference type="KEGG" id="dpo:4802489"/>
<dbReference type="CTD" id="40630"/>
<dbReference type="eggNOG" id="KOG2630">
    <property type="taxonomic scope" value="Eukaryota"/>
</dbReference>
<dbReference type="HOGENOM" id="CLU_023273_0_0_1"/>
<dbReference type="InParanoid" id="Q296B0"/>
<dbReference type="OMA" id="LQGMVWE"/>
<dbReference type="UniPathway" id="UPA00904">
    <property type="reaction ID" value="UER00876"/>
</dbReference>
<dbReference type="UniPathway" id="UPA00904">
    <property type="reaction ID" value="UER00877"/>
</dbReference>
<dbReference type="Proteomes" id="UP000001819">
    <property type="component" value="Chromosome 2"/>
</dbReference>
<dbReference type="Bgee" id="FBgn0071504">
    <property type="expression patterns" value="Expressed in male reproductive system and 3 other cell types or tissues"/>
</dbReference>
<dbReference type="GO" id="GO:0005737">
    <property type="term" value="C:cytoplasm"/>
    <property type="evidence" value="ECO:0007669"/>
    <property type="project" value="UniProtKB-SubCell"/>
</dbReference>
<dbReference type="GO" id="GO:0005634">
    <property type="term" value="C:nucleus"/>
    <property type="evidence" value="ECO:0007669"/>
    <property type="project" value="UniProtKB-SubCell"/>
</dbReference>
<dbReference type="GO" id="GO:0043874">
    <property type="term" value="F:acireductone synthase activity"/>
    <property type="evidence" value="ECO:0007669"/>
    <property type="project" value="UniProtKB-EC"/>
</dbReference>
<dbReference type="GO" id="GO:0000287">
    <property type="term" value="F:magnesium ion binding"/>
    <property type="evidence" value="ECO:0007669"/>
    <property type="project" value="UniProtKB-UniRule"/>
</dbReference>
<dbReference type="GO" id="GO:0019509">
    <property type="term" value="P:L-methionine salvage from methylthioadenosine"/>
    <property type="evidence" value="ECO:0007669"/>
    <property type="project" value="UniProtKB-UniRule"/>
</dbReference>
<dbReference type="CDD" id="cd01629">
    <property type="entry name" value="HAD_EP"/>
    <property type="match status" value="1"/>
</dbReference>
<dbReference type="FunFam" id="1.10.720.60:FF:000007">
    <property type="entry name" value="Enolase-phosphatase E1"/>
    <property type="match status" value="1"/>
</dbReference>
<dbReference type="FunFam" id="3.40.50.1000:FF:000079">
    <property type="entry name" value="Enolase-phosphatase E1"/>
    <property type="match status" value="1"/>
</dbReference>
<dbReference type="Gene3D" id="1.10.720.60">
    <property type="match status" value="1"/>
</dbReference>
<dbReference type="Gene3D" id="3.40.50.1000">
    <property type="entry name" value="HAD superfamily/HAD-like"/>
    <property type="match status" value="1"/>
</dbReference>
<dbReference type="HAMAP" id="MF_01681">
    <property type="entry name" value="Salvage_MtnC"/>
    <property type="match status" value="1"/>
</dbReference>
<dbReference type="HAMAP" id="MF_03117">
    <property type="entry name" value="Salvage_MtnC_euk"/>
    <property type="match status" value="1"/>
</dbReference>
<dbReference type="InterPro" id="IPR023943">
    <property type="entry name" value="Enolase-ppase_E1"/>
</dbReference>
<dbReference type="InterPro" id="IPR027511">
    <property type="entry name" value="ENOPH1_eukaryotes"/>
</dbReference>
<dbReference type="InterPro" id="IPR036412">
    <property type="entry name" value="HAD-like_sf"/>
</dbReference>
<dbReference type="InterPro" id="IPR006439">
    <property type="entry name" value="HAD-SF_hydro_IA"/>
</dbReference>
<dbReference type="InterPro" id="IPR023214">
    <property type="entry name" value="HAD_sf"/>
</dbReference>
<dbReference type="NCBIfam" id="TIGR01691">
    <property type="entry name" value="enolase-ppase"/>
    <property type="match status" value="1"/>
</dbReference>
<dbReference type="NCBIfam" id="TIGR01549">
    <property type="entry name" value="HAD-SF-IA-v1"/>
    <property type="match status" value="1"/>
</dbReference>
<dbReference type="PANTHER" id="PTHR20371">
    <property type="entry name" value="ENOLASE-PHOSPHATASE E1"/>
    <property type="match status" value="1"/>
</dbReference>
<dbReference type="PANTHER" id="PTHR20371:SF1">
    <property type="entry name" value="ENOLASE-PHOSPHATASE E1"/>
    <property type="match status" value="1"/>
</dbReference>
<dbReference type="Pfam" id="PF00702">
    <property type="entry name" value="Hydrolase"/>
    <property type="match status" value="1"/>
</dbReference>
<dbReference type="SFLD" id="SFLDG01133">
    <property type="entry name" value="C1.5.4:_Enolase-phosphatase_Li"/>
    <property type="match status" value="1"/>
</dbReference>
<dbReference type="SFLD" id="SFLDF00044">
    <property type="entry name" value="enolase-phosphatase"/>
    <property type="match status" value="1"/>
</dbReference>
<dbReference type="SUPFAM" id="SSF56784">
    <property type="entry name" value="HAD-like"/>
    <property type="match status" value="1"/>
</dbReference>
<evidence type="ECO:0000255" key="1">
    <source>
        <dbReference type="HAMAP-Rule" id="MF_03117"/>
    </source>
</evidence>
<gene>
    <name type="ORF">GA11453</name>
</gene>
<protein>
    <recommendedName>
        <fullName evidence="1">Enolase-phosphatase E1</fullName>
        <ecNumber evidence="1">3.1.3.77</ecNumber>
    </recommendedName>
    <alternativeName>
        <fullName evidence="1">2,3-diketo-5-methylthio-1-phosphopentane phosphatase</fullName>
    </alternativeName>
</protein>
<reference key="1">
    <citation type="journal article" date="2005" name="Genome Res.">
        <title>Comparative genome sequencing of Drosophila pseudoobscura: chromosomal, gene, and cis-element evolution.</title>
        <authorList>
            <person name="Richards S."/>
            <person name="Liu Y."/>
            <person name="Bettencourt B.R."/>
            <person name="Hradecky P."/>
            <person name="Letovsky S."/>
            <person name="Nielsen R."/>
            <person name="Thornton K."/>
            <person name="Hubisz M.J."/>
            <person name="Chen R."/>
            <person name="Meisel R.P."/>
            <person name="Couronne O."/>
            <person name="Hua S."/>
            <person name="Smith M.A."/>
            <person name="Zhang P."/>
            <person name="Liu J."/>
            <person name="Bussemaker H.J."/>
            <person name="van Batenburg M.F."/>
            <person name="Howells S.L."/>
            <person name="Scherer S.E."/>
            <person name="Sodergren E."/>
            <person name="Matthews B.B."/>
            <person name="Crosby M.A."/>
            <person name="Schroeder A.J."/>
            <person name="Ortiz-Barrientos D."/>
            <person name="Rives C.M."/>
            <person name="Metzker M.L."/>
            <person name="Muzny D.M."/>
            <person name="Scott G."/>
            <person name="Steffen D."/>
            <person name="Wheeler D.A."/>
            <person name="Worley K.C."/>
            <person name="Havlak P."/>
            <person name="Durbin K.J."/>
            <person name="Egan A."/>
            <person name="Gill R."/>
            <person name="Hume J."/>
            <person name="Morgan M.B."/>
            <person name="Miner G."/>
            <person name="Hamilton C."/>
            <person name="Huang Y."/>
            <person name="Waldron L."/>
            <person name="Verduzco D."/>
            <person name="Clerc-Blankenburg K.P."/>
            <person name="Dubchak I."/>
            <person name="Noor M.A.F."/>
            <person name="Anderson W."/>
            <person name="White K.P."/>
            <person name="Clark A.G."/>
            <person name="Schaeffer S.W."/>
            <person name="Gelbart W.M."/>
            <person name="Weinstock G.M."/>
            <person name="Gibbs R.A."/>
        </authorList>
    </citation>
    <scope>NUCLEOTIDE SEQUENCE [LARGE SCALE GENOMIC DNA]</scope>
    <source>
        <strain>MV2-25 / Tucson 14011-0121.94</strain>
    </source>
</reference>
<proteinExistence type="inferred from homology"/>
<organism>
    <name type="scientific">Drosophila pseudoobscura pseudoobscura</name>
    <name type="common">Fruit fly</name>
    <dbReference type="NCBI Taxonomy" id="46245"/>
    <lineage>
        <taxon>Eukaryota</taxon>
        <taxon>Metazoa</taxon>
        <taxon>Ecdysozoa</taxon>
        <taxon>Arthropoda</taxon>
        <taxon>Hexapoda</taxon>
        <taxon>Insecta</taxon>
        <taxon>Pterygota</taxon>
        <taxon>Neoptera</taxon>
        <taxon>Endopterygota</taxon>
        <taxon>Diptera</taxon>
        <taxon>Brachycera</taxon>
        <taxon>Muscomorpha</taxon>
        <taxon>Ephydroidea</taxon>
        <taxon>Drosophilidae</taxon>
        <taxon>Drosophila</taxon>
        <taxon>Sophophora</taxon>
    </lineage>
</organism>
<name>ENOPH_DROPS</name>